<evidence type="ECO:0000255" key="1">
    <source>
        <dbReference type="HAMAP-Rule" id="MF_00296"/>
    </source>
</evidence>
<name>SST_XANC8</name>
<protein>
    <recommendedName>
        <fullName evidence="1">Serine O-succinyltransferase</fullName>
        <shortName evidence="1">SST</shortName>
        <ecNumber evidence="1">2.3.1.-</ecNumber>
    </recommendedName>
</protein>
<sequence>MTEFIPTGTRFHALPSPLPMKRGGVLHQARVAYETWGTLDADHGNAVLIVTGLSPNAHAAANADNPEPGWWEAMVGPGKPIDTDRWFVVCVNSLGSCKGSTGPASIDPATGAPYRLSFPELSIEDVADAAADVVRALGIAQLACLIGNSMGGMTALALLLRHPGIARSHINISGSAQALPFSIAIRSLQREAIRLDPHWNGGHYDDVQYPESGMRMARKLGVITYRSALEWDGRFGRVRLDSELTAEDPFGLEFQVESYLEGHARRFVRFFDPNCYLYLSRSMDWFDLAEYAPDTRADAAAPESGVLAGLAQIRIARALAIGANTDILFPVQQQEQIAEGLRAGGADAQFLGLDSPQGHDAFLVDFARFGPAVRAFLADC</sequence>
<accession>Q4UVH1</accession>
<comment type="function">
    <text evidence="1">Transfers a succinyl group from succinyl-CoA to L-serine, forming succinyl-L-serine.</text>
</comment>
<comment type="catalytic activity">
    <reaction evidence="1">
        <text>succinyl-CoA + L-serine = O-succinyl-L-serine + CoA</text>
        <dbReference type="Rhea" id="RHEA:52820"/>
        <dbReference type="ChEBI" id="CHEBI:33384"/>
        <dbReference type="ChEBI" id="CHEBI:57287"/>
        <dbReference type="ChEBI" id="CHEBI:57292"/>
        <dbReference type="ChEBI" id="CHEBI:136856"/>
    </reaction>
</comment>
<comment type="pathway">
    <text evidence="1">Amino-acid biosynthesis; L-cysteine biosynthesis; L-cysteine from L-serine: step 1/2.</text>
</comment>
<comment type="subunit">
    <text evidence="1">Homodimer.</text>
</comment>
<comment type="subcellular location">
    <subcellularLocation>
        <location evidence="1">Cytoplasm</location>
    </subcellularLocation>
</comment>
<comment type="similarity">
    <text evidence="1">Belongs to the AB hydrolase superfamily. MetX family.</text>
</comment>
<dbReference type="EC" id="2.3.1.-" evidence="1"/>
<dbReference type="EMBL" id="CP000050">
    <property type="protein sequence ID" value="AAY48952.1"/>
    <property type="molecule type" value="Genomic_DNA"/>
</dbReference>
<dbReference type="RefSeq" id="WP_011037373.1">
    <property type="nucleotide sequence ID" value="NZ_CP155948.1"/>
</dbReference>
<dbReference type="SMR" id="Q4UVH1"/>
<dbReference type="ESTHER" id="xanca-METX">
    <property type="family name" value="Homoserine_transacetylase"/>
</dbReference>
<dbReference type="KEGG" id="xcb:XC_1889"/>
<dbReference type="HOGENOM" id="CLU_028760_1_2_6"/>
<dbReference type="UniPathway" id="UPA00136">
    <property type="reaction ID" value="UER00199"/>
</dbReference>
<dbReference type="Proteomes" id="UP000000420">
    <property type="component" value="Chromosome"/>
</dbReference>
<dbReference type="GO" id="GO:0005737">
    <property type="term" value="C:cytoplasm"/>
    <property type="evidence" value="ECO:0007669"/>
    <property type="project" value="UniProtKB-SubCell"/>
</dbReference>
<dbReference type="GO" id="GO:0004414">
    <property type="term" value="F:homoserine O-acetyltransferase activity"/>
    <property type="evidence" value="ECO:0007669"/>
    <property type="project" value="TreeGrafter"/>
</dbReference>
<dbReference type="GO" id="GO:0160210">
    <property type="term" value="F:L-serine O-succinyltransferase activity"/>
    <property type="evidence" value="ECO:0007669"/>
    <property type="project" value="RHEA"/>
</dbReference>
<dbReference type="GO" id="GO:0006535">
    <property type="term" value="P:cysteine biosynthetic process from serine"/>
    <property type="evidence" value="ECO:0007669"/>
    <property type="project" value="UniProtKB-UniRule"/>
</dbReference>
<dbReference type="GO" id="GO:0009092">
    <property type="term" value="P:homoserine metabolic process"/>
    <property type="evidence" value="ECO:0007669"/>
    <property type="project" value="TreeGrafter"/>
</dbReference>
<dbReference type="GO" id="GO:0009086">
    <property type="term" value="P:methionine biosynthetic process"/>
    <property type="evidence" value="ECO:0007669"/>
    <property type="project" value="TreeGrafter"/>
</dbReference>
<dbReference type="Gene3D" id="1.10.1740.110">
    <property type="match status" value="1"/>
</dbReference>
<dbReference type="Gene3D" id="3.40.50.1820">
    <property type="entry name" value="alpha/beta hydrolase"/>
    <property type="match status" value="1"/>
</dbReference>
<dbReference type="HAMAP" id="MF_00296">
    <property type="entry name" value="MetX_acyltransf"/>
    <property type="match status" value="1"/>
</dbReference>
<dbReference type="InterPro" id="IPR000073">
    <property type="entry name" value="AB_hydrolase_1"/>
</dbReference>
<dbReference type="InterPro" id="IPR029058">
    <property type="entry name" value="AB_hydrolase_fold"/>
</dbReference>
<dbReference type="InterPro" id="IPR008220">
    <property type="entry name" value="HAT_MetX-like"/>
</dbReference>
<dbReference type="NCBIfam" id="TIGR01392">
    <property type="entry name" value="homoserO_Ac_trn"/>
    <property type="match status" value="1"/>
</dbReference>
<dbReference type="NCBIfam" id="NF001209">
    <property type="entry name" value="PRK00175.1"/>
    <property type="match status" value="1"/>
</dbReference>
<dbReference type="PANTHER" id="PTHR32268">
    <property type="entry name" value="HOMOSERINE O-ACETYLTRANSFERASE"/>
    <property type="match status" value="1"/>
</dbReference>
<dbReference type="PANTHER" id="PTHR32268:SF11">
    <property type="entry name" value="HOMOSERINE O-ACETYLTRANSFERASE"/>
    <property type="match status" value="1"/>
</dbReference>
<dbReference type="Pfam" id="PF00561">
    <property type="entry name" value="Abhydrolase_1"/>
    <property type="match status" value="1"/>
</dbReference>
<dbReference type="PIRSF" id="PIRSF000443">
    <property type="entry name" value="Homoser_Ac_trans"/>
    <property type="match status" value="1"/>
</dbReference>
<dbReference type="SUPFAM" id="SSF53474">
    <property type="entry name" value="alpha/beta-Hydrolases"/>
    <property type="match status" value="1"/>
</dbReference>
<organism>
    <name type="scientific">Xanthomonas campestris pv. campestris (strain 8004)</name>
    <dbReference type="NCBI Taxonomy" id="314565"/>
    <lineage>
        <taxon>Bacteria</taxon>
        <taxon>Pseudomonadati</taxon>
        <taxon>Pseudomonadota</taxon>
        <taxon>Gammaproteobacteria</taxon>
        <taxon>Lysobacterales</taxon>
        <taxon>Lysobacteraceae</taxon>
        <taxon>Xanthomonas</taxon>
    </lineage>
</organism>
<keyword id="KW-0012">Acyltransferase</keyword>
<keyword id="KW-0028">Amino-acid biosynthesis</keyword>
<keyword id="KW-0198">Cysteine biosynthesis</keyword>
<keyword id="KW-0963">Cytoplasm</keyword>
<keyword id="KW-0808">Transferase</keyword>
<gene>
    <name type="primary">metX</name>
    <name type="ordered locus">XC_1889</name>
</gene>
<reference key="1">
    <citation type="journal article" date="2005" name="Genome Res.">
        <title>Comparative and functional genomic analyses of the pathogenicity of phytopathogen Xanthomonas campestris pv. campestris.</title>
        <authorList>
            <person name="Qian W."/>
            <person name="Jia Y."/>
            <person name="Ren S.-X."/>
            <person name="He Y.-Q."/>
            <person name="Feng J.-X."/>
            <person name="Lu L.-F."/>
            <person name="Sun Q."/>
            <person name="Ying G."/>
            <person name="Tang D.-J."/>
            <person name="Tang H."/>
            <person name="Wu W."/>
            <person name="Hao P."/>
            <person name="Wang L."/>
            <person name="Jiang B.-L."/>
            <person name="Zeng S."/>
            <person name="Gu W.-Y."/>
            <person name="Lu G."/>
            <person name="Rong L."/>
            <person name="Tian Y."/>
            <person name="Yao Z."/>
            <person name="Fu G."/>
            <person name="Chen B."/>
            <person name="Fang R."/>
            <person name="Qiang B."/>
            <person name="Chen Z."/>
            <person name="Zhao G.-P."/>
            <person name="Tang J.-L."/>
            <person name="He C."/>
        </authorList>
    </citation>
    <scope>NUCLEOTIDE SEQUENCE [LARGE SCALE GENOMIC DNA]</scope>
    <source>
        <strain>8004</strain>
    </source>
</reference>
<feature type="chain" id="PRO_0000231889" description="Serine O-succinyltransferase">
    <location>
        <begin position="1"/>
        <end position="380"/>
    </location>
</feature>
<feature type="domain" description="AB hydrolase-1" evidence="1">
    <location>
        <begin position="45"/>
        <end position="365"/>
    </location>
</feature>
<feature type="region of interest" description="Important for substrate specificity" evidence="1">
    <location>
        <begin position="52"/>
        <end position="55"/>
    </location>
</feature>
<feature type="active site" description="Nucleophile" evidence="1">
    <location>
        <position position="149"/>
    </location>
</feature>
<feature type="active site" evidence="1">
    <location>
        <position position="326"/>
    </location>
</feature>
<feature type="active site" evidence="1">
    <location>
        <position position="359"/>
    </location>
</feature>
<feature type="binding site" evidence="1">
    <location>
        <position position="218"/>
    </location>
    <ligand>
        <name>substrate</name>
    </ligand>
</feature>
<feature type="binding site" evidence="1">
    <location>
        <position position="360"/>
    </location>
    <ligand>
        <name>substrate</name>
    </ligand>
</feature>
<feature type="site" description="Important for acyl-CoA specificity" evidence="1">
    <location>
        <position position="186"/>
    </location>
</feature>
<proteinExistence type="inferred from homology"/>